<name>RL22_YERPN</name>
<proteinExistence type="inferred from homology"/>
<evidence type="ECO:0000255" key="1">
    <source>
        <dbReference type="HAMAP-Rule" id="MF_01331"/>
    </source>
</evidence>
<evidence type="ECO:0000305" key="2"/>
<accession>Q1CCU9</accession>
<accession>D1Q2L6</accession>
<sequence>METIAKHRHARSSAQKVRLVADLIRGKKVSQALETLTYTNKKAAGLVKKVLESAIANAEHNDGADIDDLKVTKIFVDEGPSMKRIMPRAKGRADRILKRTSHITVVVSDR</sequence>
<organism>
    <name type="scientific">Yersinia pestis bv. Antiqua (strain Nepal516)</name>
    <dbReference type="NCBI Taxonomy" id="377628"/>
    <lineage>
        <taxon>Bacteria</taxon>
        <taxon>Pseudomonadati</taxon>
        <taxon>Pseudomonadota</taxon>
        <taxon>Gammaproteobacteria</taxon>
        <taxon>Enterobacterales</taxon>
        <taxon>Yersiniaceae</taxon>
        <taxon>Yersinia</taxon>
    </lineage>
</organism>
<gene>
    <name evidence="1" type="primary">rplV</name>
    <name type="ordered locus">YPN_3854</name>
    <name type="ORF">YP516_4377</name>
</gene>
<feature type="chain" id="PRO_1000052676" description="Large ribosomal subunit protein uL22">
    <location>
        <begin position="1"/>
        <end position="110"/>
    </location>
</feature>
<reference key="1">
    <citation type="journal article" date="2006" name="J. Bacteriol.">
        <title>Complete genome sequence of Yersinia pestis strains Antiqua and Nepal516: evidence of gene reduction in an emerging pathogen.</title>
        <authorList>
            <person name="Chain P.S.G."/>
            <person name="Hu P."/>
            <person name="Malfatti S.A."/>
            <person name="Radnedge L."/>
            <person name="Larimer F."/>
            <person name="Vergez L.M."/>
            <person name="Worsham P."/>
            <person name="Chu M.C."/>
            <person name="Andersen G.L."/>
        </authorList>
    </citation>
    <scope>NUCLEOTIDE SEQUENCE [LARGE SCALE GENOMIC DNA]</scope>
    <source>
        <strain>Nepal516</strain>
    </source>
</reference>
<reference key="2">
    <citation type="submission" date="2009-04" db="EMBL/GenBank/DDBJ databases">
        <title>Yersinia pestis Nepal516A whole genome shotgun sequencing project.</title>
        <authorList>
            <person name="Plunkett G. III"/>
            <person name="Anderson B.D."/>
            <person name="Baumler D.J."/>
            <person name="Burland V."/>
            <person name="Cabot E.L."/>
            <person name="Glasner J.D."/>
            <person name="Mau B."/>
            <person name="Neeno-Eckwall E."/>
            <person name="Perna N.T."/>
            <person name="Munk A.C."/>
            <person name="Tapia R."/>
            <person name="Green L.D."/>
            <person name="Rogers Y.C."/>
            <person name="Detter J.C."/>
            <person name="Bruce D.C."/>
            <person name="Brettin T.S."/>
        </authorList>
    </citation>
    <scope>NUCLEOTIDE SEQUENCE [LARGE SCALE GENOMIC DNA]</scope>
    <source>
        <strain>Nepal516</strain>
    </source>
</reference>
<keyword id="KW-0687">Ribonucleoprotein</keyword>
<keyword id="KW-0689">Ribosomal protein</keyword>
<keyword id="KW-0694">RNA-binding</keyword>
<keyword id="KW-0699">rRNA-binding</keyword>
<protein>
    <recommendedName>
        <fullName evidence="1">Large ribosomal subunit protein uL22</fullName>
    </recommendedName>
    <alternativeName>
        <fullName evidence="2">50S ribosomal protein L22</fullName>
    </alternativeName>
</protein>
<dbReference type="EMBL" id="CP000305">
    <property type="protein sequence ID" value="ABG20181.1"/>
    <property type="molecule type" value="Genomic_DNA"/>
</dbReference>
<dbReference type="EMBL" id="ACNQ01000019">
    <property type="protein sequence ID" value="EEO74769.1"/>
    <property type="molecule type" value="Genomic_DNA"/>
</dbReference>
<dbReference type="RefSeq" id="WP_002223844.1">
    <property type="nucleotide sequence ID" value="NZ_ACNQ01000019.1"/>
</dbReference>
<dbReference type="SMR" id="Q1CCU9"/>
<dbReference type="GeneID" id="98190601"/>
<dbReference type="KEGG" id="ypn:YPN_3854"/>
<dbReference type="HOGENOM" id="CLU_083987_3_3_6"/>
<dbReference type="Proteomes" id="UP000008936">
    <property type="component" value="Chromosome"/>
</dbReference>
<dbReference type="GO" id="GO:0022625">
    <property type="term" value="C:cytosolic large ribosomal subunit"/>
    <property type="evidence" value="ECO:0007669"/>
    <property type="project" value="TreeGrafter"/>
</dbReference>
<dbReference type="GO" id="GO:0019843">
    <property type="term" value="F:rRNA binding"/>
    <property type="evidence" value="ECO:0007669"/>
    <property type="project" value="UniProtKB-UniRule"/>
</dbReference>
<dbReference type="GO" id="GO:0003735">
    <property type="term" value="F:structural constituent of ribosome"/>
    <property type="evidence" value="ECO:0007669"/>
    <property type="project" value="InterPro"/>
</dbReference>
<dbReference type="GO" id="GO:0006412">
    <property type="term" value="P:translation"/>
    <property type="evidence" value="ECO:0007669"/>
    <property type="project" value="UniProtKB-UniRule"/>
</dbReference>
<dbReference type="CDD" id="cd00336">
    <property type="entry name" value="Ribosomal_L22"/>
    <property type="match status" value="1"/>
</dbReference>
<dbReference type="FunFam" id="3.90.470.10:FF:000001">
    <property type="entry name" value="50S ribosomal protein L22"/>
    <property type="match status" value="1"/>
</dbReference>
<dbReference type="Gene3D" id="3.90.470.10">
    <property type="entry name" value="Ribosomal protein L22/L17"/>
    <property type="match status" value="1"/>
</dbReference>
<dbReference type="HAMAP" id="MF_01331_B">
    <property type="entry name" value="Ribosomal_uL22_B"/>
    <property type="match status" value="1"/>
</dbReference>
<dbReference type="InterPro" id="IPR001063">
    <property type="entry name" value="Ribosomal_uL22"/>
</dbReference>
<dbReference type="InterPro" id="IPR005727">
    <property type="entry name" value="Ribosomal_uL22_bac/chlpt-type"/>
</dbReference>
<dbReference type="InterPro" id="IPR047867">
    <property type="entry name" value="Ribosomal_uL22_bac/org-type"/>
</dbReference>
<dbReference type="InterPro" id="IPR018260">
    <property type="entry name" value="Ribosomal_uL22_CS"/>
</dbReference>
<dbReference type="InterPro" id="IPR036394">
    <property type="entry name" value="Ribosomal_uL22_sf"/>
</dbReference>
<dbReference type="NCBIfam" id="TIGR01044">
    <property type="entry name" value="rplV_bact"/>
    <property type="match status" value="1"/>
</dbReference>
<dbReference type="PANTHER" id="PTHR13501">
    <property type="entry name" value="CHLOROPLAST 50S RIBOSOMAL PROTEIN L22-RELATED"/>
    <property type="match status" value="1"/>
</dbReference>
<dbReference type="PANTHER" id="PTHR13501:SF8">
    <property type="entry name" value="LARGE RIBOSOMAL SUBUNIT PROTEIN UL22M"/>
    <property type="match status" value="1"/>
</dbReference>
<dbReference type="Pfam" id="PF00237">
    <property type="entry name" value="Ribosomal_L22"/>
    <property type="match status" value="1"/>
</dbReference>
<dbReference type="SUPFAM" id="SSF54843">
    <property type="entry name" value="Ribosomal protein L22"/>
    <property type="match status" value="1"/>
</dbReference>
<dbReference type="PROSITE" id="PS00464">
    <property type="entry name" value="RIBOSOMAL_L22"/>
    <property type="match status" value="1"/>
</dbReference>
<comment type="function">
    <text evidence="1">This protein binds specifically to 23S rRNA; its binding is stimulated by other ribosomal proteins, e.g. L4, L17, and L20. It is important during the early stages of 50S assembly. It makes multiple contacts with different domains of the 23S rRNA in the assembled 50S subunit and ribosome (By similarity).</text>
</comment>
<comment type="function">
    <text evidence="1">The globular domain of the protein is located near the polypeptide exit tunnel on the outside of the subunit, while an extended beta-hairpin is found that lines the wall of the exit tunnel in the center of the 70S ribosome.</text>
</comment>
<comment type="subunit">
    <text evidence="1">Part of the 50S ribosomal subunit.</text>
</comment>
<comment type="similarity">
    <text evidence="1">Belongs to the universal ribosomal protein uL22 family.</text>
</comment>